<organism>
    <name type="scientific">Naja kaouthia</name>
    <name type="common">Monocled cobra</name>
    <name type="synonym">Naja siamensis</name>
    <dbReference type="NCBI Taxonomy" id="8649"/>
    <lineage>
        <taxon>Eukaryota</taxon>
        <taxon>Metazoa</taxon>
        <taxon>Chordata</taxon>
        <taxon>Craniata</taxon>
        <taxon>Vertebrata</taxon>
        <taxon>Euteleostomi</taxon>
        <taxon>Lepidosauria</taxon>
        <taxon>Squamata</taxon>
        <taxon>Bifurcata</taxon>
        <taxon>Unidentata</taxon>
        <taxon>Episquamata</taxon>
        <taxon>Toxicofera</taxon>
        <taxon>Serpentes</taxon>
        <taxon>Colubroidea</taxon>
        <taxon>Elapidae</taxon>
        <taxon>Elapinae</taxon>
        <taxon>Naja</taxon>
    </lineage>
</organism>
<protein>
    <recommendedName>
        <fullName>Cytotoxin 5</fullName>
    </recommendedName>
    <alternativeName>
        <fullName>Cytotoxin II</fullName>
    </alternativeName>
</protein>
<proteinExistence type="evidence at protein level"/>
<evidence type="ECO:0000250" key="1">
    <source>
        <dbReference type="UniProtKB" id="P60301"/>
    </source>
</evidence>
<evidence type="ECO:0000250" key="2">
    <source>
        <dbReference type="UniProtKB" id="P60304"/>
    </source>
</evidence>
<evidence type="ECO:0000269" key="3">
    <source>
    </source>
</evidence>
<evidence type="ECO:0000305" key="4"/>
<feature type="chain" id="PRO_0000093501" description="Cytotoxin 5" evidence="3">
    <location>
        <begin position="1"/>
        <end position="60"/>
    </location>
</feature>
<feature type="disulfide bond" evidence="1">
    <location>
        <begin position="3"/>
        <end position="21"/>
    </location>
</feature>
<feature type="disulfide bond" evidence="1">
    <location>
        <begin position="14"/>
        <end position="38"/>
    </location>
</feature>
<feature type="disulfide bond" evidence="1">
    <location>
        <begin position="42"/>
        <end position="53"/>
    </location>
</feature>
<feature type="disulfide bond" evidence="1">
    <location>
        <begin position="54"/>
        <end position="59"/>
    </location>
</feature>
<reference key="1">
    <citation type="journal article" date="1988" name="Biochim. Biophys. Acta">
        <title>Amino-acid sequences of four cytotoxins (cytotoxins I, II, III and IV) purified from the venom of the Thailand cobra, Naja naja siamensis.</title>
        <authorList>
            <person name="Ohkura K."/>
            <person name="Inoue S."/>
            <person name="Ikeda K."/>
            <person name="Hayashi K."/>
        </authorList>
    </citation>
    <scope>PROTEIN SEQUENCE</scope>
    <scope>SUBCELLULAR LOCATION</scope>
    <source>
        <tissue>Venom</tissue>
    </source>
</reference>
<accession>P24779</accession>
<sequence length="60" mass="6654">LKCNKLIPLAYKTCPAGKNLCYKMFMVAAPKVPVKRGCIDACPKNSLLVKYVCCNTDRCN</sequence>
<dbReference type="PIR" id="JS0028">
    <property type="entry name" value="JS0028"/>
</dbReference>
<dbReference type="SMR" id="P24779"/>
<dbReference type="GO" id="GO:0005576">
    <property type="term" value="C:extracellular region"/>
    <property type="evidence" value="ECO:0007669"/>
    <property type="project" value="UniProtKB-SubCell"/>
</dbReference>
<dbReference type="GO" id="GO:0016020">
    <property type="term" value="C:membrane"/>
    <property type="evidence" value="ECO:0007669"/>
    <property type="project" value="UniProtKB-KW"/>
</dbReference>
<dbReference type="GO" id="GO:0044218">
    <property type="term" value="C:other organism cell membrane"/>
    <property type="evidence" value="ECO:0007669"/>
    <property type="project" value="UniProtKB-KW"/>
</dbReference>
<dbReference type="GO" id="GO:0090729">
    <property type="term" value="F:toxin activity"/>
    <property type="evidence" value="ECO:0007669"/>
    <property type="project" value="UniProtKB-KW"/>
</dbReference>
<dbReference type="GO" id="GO:0031640">
    <property type="term" value="P:killing of cells of another organism"/>
    <property type="evidence" value="ECO:0007669"/>
    <property type="project" value="UniProtKB-KW"/>
</dbReference>
<dbReference type="CDD" id="cd00206">
    <property type="entry name" value="TFP_snake_toxin"/>
    <property type="match status" value="1"/>
</dbReference>
<dbReference type="FunFam" id="2.10.60.10:FF:000024">
    <property type="entry name" value="Cytotoxin 1"/>
    <property type="match status" value="1"/>
</dbReference>
<dbReference type="Gene3D" id="2.10.60.10">
    <property type="entry name" value="CD59"/>
    <property type="match status" value="1"/>
</dbReference>
<dbReference type="InterPro" id="IPR003572">
    <property type="entry name" value="Cytotoxin_Cobra"/>
</dbReference>
<dbReference type="InterPro" id="IPR003571">
    <property type="entry name" value="Snake_3FTx"/>
</dbReference>
<dbReference type="InterPro" id="IPR045860">
    <property type="entry name" value="Snake_toxin-like_sf"/>
</dbReference>
<dbReference type="InterPro" id="IPR018354">
    <property type="entry name" value="Snake_toxin_con_site"/>
</dbReference>
<dbReference type="InterPro" id="IPR054131">
    <property type="entry name" value="Toxin_cobra-type"/>
</dbReference>
<dbReference type="Pfam" id="PF21947">
    <property type="entry name" value="Toxin_cobra-type"/>
    <property type="match status" value="1"/>
</dbReference>
<dbReference type="PRINTS" id="PR00282">
    <property type="entry name" value="CYTOTOXIN"/>
</dbReference>
<dbReference type="SUPFAM" id="SSF57302">
    <property type="entry name" value="Snake toxin-like"/>
    <property type="match status" value="1"/>
</dbReference>
<dbReference type="PROSITE" id="PS00272">
    <property type="entry name" value="SNAKE_TOXIN"/>
    <property type="match status" value="1"/>
</dbReference>
<keyword id="KW-0123">Cardiotoxin</keyword>
<keyword id="KW-0204">Cytolysis</keyword>
<keyword id="KW-0903">Direct protein sequencing</keyword>
<keyword id="KW-1015">Disulfide bond</keyword>
<keyword id="KW-0472">Membrane</keyword>
<keyword id="KW-0964">Secreted</keyword>
<keyword id="KW-1052">Target cell membrane</keyword>
<keyword id="KW-1053">Target membrane</keyword>
<keyword id="KW-0800">Toxin</keyword>
<comment type="function">
    <text evidence="1 2">Shows cytolytic activity on many different cells by forming pore in lipid membranes. In vivo, increases heart rate or kills the animal by cardiac arrest. In addition, it binds to heparin with high affinity, interacts with Kv channel-interacting protein 1 (KCNIP1) in a calcium-independent manner, and binds to integrin alpha-V/beta-3 (ITGAV/ITGB3) with moderate affinity.</text>
</comment>
<comment type="subunit">
    <text evidence="1">Monomer in solution; Homodimer and oligomer in the presence of negatively charged lipids forming a pore with a size ranging between 20 and 30 Angstroms.</text>
</comment>
<comment type="subcellular location">
    <subcellularLocation>
        <location evidence="3">Secreted</location>
    </subcellularLocation>
    <subcellularLocation>
        <location evidence="1">Target cell membrane</location>
    </subcellularLocation>
</comment>
<comment type="tissue specificity">
    <text evidence="4">Expressed by the venom gland.</text>
</comment>
<comment type="miscellaneous">
    <text evidence="4">Is classified as a P-type cytotoxin, since a proline residue stands at position 30 (Pro-31 in standard classification).</text>
</comment>
<comment type="similarity">
    <text evidence="4">Belongs to the three-finger toxin family. Short-chain subfamily. Type IA cytotoxin sub-subfamily.</text>
</comment>
<name>3SA5_NAJKA</name>